<proteinExistence type="inferred from homology"/>
<reference key="1">
    <citation type="journal article" date="2003" name="Proc. Natl. Acad. Sci. U.S.A.">
        <title>The genome sequence of Blochmannia floridanus: comparative analysis of reduced genomes.</title>
        <authorList>
            <person name="Gil R."/>
            <person name="Silva F.J."/>
            <person name="Zientz E."/>
            <person name="Delmotte F."/>
            <person name="Gonzalez-Candelas F."/>
            <person name="Latorre A."/>
            <person name="Rausell C."/>
            <person name="Kamerbeek J."/>
            <person name="Gadau J."/>
            <person name="Hoelldobler B."/>
            <person name="van Ham R.C.H.J."/>
            <person name="Gross R."/>
            <person name="Moya A."/>
        </authorList>
    </citation>
    <scope>NUCLEOTIDE SEQUENCE [LARGE SCALE GENOMIC DNA]</scope>
</reference>
<keyword id="KW-0963">Cytoplasm</keyword>
<keyword id="KW-0489">Methyltransferase</keyword>
<keyword id="KW-1185">Reference proteome</keyword>
<keyword id="KW-0949">S-adenosyl-L-methionine</keyword>
<keyword id="KW-0808">Transferase</keyword>
<keyword id="KW-0819">tRNA processing</keyword>
<name>TRMD_BLOFL</name>
<gene>
    <name evidence="1" type="primary">trmD</name>
    <name type="ordered locus">Bfl175</name>
</gene>
<protein>
    <recommendedName>
        <fullName evidence="1">tRNA (guanine-N(1)-)-methyltransferase</fullName>
        <ecNumber evidence="1">2.1.1.228</ecNumber>
    </recommendedName>
    <alternativeName>
        <fullName evidence="1">M1G-methyltransferase</fullName>
    </alternativeName>
    <alternativeName>
        <fullName evidence="1">tRNA [GM37] methyltransferase</fullName>
    </alternativeName>
</protein>
<dbReference type="EC" id="2.1.1.228" evidence="1"/>
<dbReference type="EMBL" id="BX248583">
    <property type="protein sequence ID" value="CAD83694.1"/>
    <property type="molecule type" value="Genomic_DNA"/>
</dbReference>
<dbReference type="SMR" id="Q7U345"/>
<dbReference type="STRING" id="203907.Bfl175"/>
<dbReference type="KEGG" id="bfl:Bfl175"/>
<dbReference type="eggNOG" id="COG0336">
    <property type="taxonomic scope" value="Bacteria"/>
</dbReference>
<dbReference type="HOGENOM" id="CLU_047363_0_1_6"/>
<dbReference type="OrthoDB" id="9807416at2"/>
<dbReference type="Proteomes" id="UP000002192">
    <property type="component" value="Chromosome"/>
</dbReference>
<dbReference type="GO" id="GO:0005829">
    <property type="term" value="C:cytosol"/>
    <property type="evidence" value="ECO:0007669"/>
    <property type="project" value="TreeGrafter"/>
</dbReference>
<dbReference type="GO" id="GO:0052906">
    <property type="term" value="F:tRNA (guanine(37)-N1)-methyltransferase activity"/>
    <property type="evidence" value="ECO:0007669"/>
    <property type="project" value="UniProtKB-UniRule"/>
</dbReference>
<dbReference type="GO" id="GO:0002939">
    <property type="term" value="P:tRNA N1-guanine methylation"/>
    <property type="evidence" value="ECO:0007669"/>
    <property type="project" value="TreeGrafter"/>
</dbReference>
<dbReference type="CDD" id="cd18080">
    <property type="entry name" value="TrmD-like"/>
    <property type="match status" value="1"/>
</dbReference>
<dbReference type="FunFam" id="1.10.1270.20:FF:000001">
    <property type="entry name" value="tRNA (guanine-N(1)-)-methyltransferase"/>
    <property type="match status" value="1"/>
</dbReference>
<dbReference type="FunFam" id="3.40.1280.10:FF:000001">
    <property type="entry name" value="tRNA (guanine-N(1)-)-methyltransferase"/>
    <property type="match status" value="1"/>
</dbReference>
<dbReference type="Gene3D" id="3.40.1280.10">
    <property type="match status" value="1"/>
</dbReference>
<dbReference type="Gene3D" id="1.10.1270.20">
    <property type="entry name" value="tRNA(m1g37)methyltransferase, domain 2"/>
    <property type="match status" value="1"/>
</dbReference>
<dbReference type="HAMAP" id="MF_00605">
    <property type="entry name" value="TrmD"/>
    <property type="match status" value="1"/>
</dbReference>
<dbReference type="InterPro" id="IPR029028">
    <property type="entry name" value="Alpha/beta_knot_MTases"/>
</dbReference>
<dbReference type="InterPro" id="IPR023148">
    <property type="entry name" value="tRNA_m1G_MeTrfase_C_sf"/>
</dbReference>
<dbReference type="InterPro" id="IPR002649">
    <property type="entry name" value="tRNA_m1G_MeTrfase_TrmD"/>
</dbReference>
<dbReference type="InterPro" id="IPR029026">
    <property type="entry name" value="tRNA_m1G_MTases_N"/>
</dbReference>
<dbReference type="InterPro" id="IPR016009">
    <property type="entry name" value="tRNA_MeTrfase_TRMD/TRM10"/>
</dbReference>
<dbReference type="NCBIfam" id="NF000648">
    <property type="entry name" value="PRK00026.1"/>
    <property type="match status" value="1"/>
</dbReference>
<dbReference type="NCBIfam" id="TIGR00088">
    <property type="entry name" value="trmD"/>
    <property type="match status" value="1"/>
</dbReference>
<dbReference type="PANTHER" id="PTHR46417">
    <property type="entry name" value="TRNA (GUANINE-N(1)-)-METHYLTRANSFERASE"/>
    <property type="match status" value="1"/>
</dbReference>
<dbReference type="PANTHER" id="PTHR46417:SF1">
    <property type="entry name" value="TRNA (GUANINE-N(1)-)-METHYLTRANSFERASE"/>
    <property type="match status" value="1"/>
</dbReference>
<dbReference type="Pfam" id="PF01746">
    <property type="entry name" value="tRNA_m1G_MT"/>
    <property type="match status" value="1"/>
</dbReference>
<dbReference type="PIRSF" id="PIRSF000386">
    <property type="entry name" value="tRNA_mtase"/>
    <property type="match status" value="1"/>
</dbReference>
<dbReference type="SUPFAM" id="SSF75217">
    <property type="entry name" value="alpha/beta knot"/>
    <property type="match status" value="1"/>
</dbReference>
<sequence>MLLGIITLFPDMFNAITRYGVVGRSVRKGGLVIKIWNPRDFTYDQYHKVDDRPYGGGVGMIMMIQPLKRAINQAKNDLGCDAKVIYLSPQGKRLCQKYVYDLAYNNQALILVCGRYQGIDERLIKMEIDEEWSIGDYVLSGGELASMVLIDAMARVLPGTLKNRNSQKSDSFFENKLDCPYYTRPKIYEGMQVPSVLLSGNHRDINKWRLKYALGNTWIKRPDLLKKIQLTQEEQLLLTEFKNEYLSG</sequence>
<evidence type="ECO:0000255" key="1">
    <source>
        <dbReference type="HAMAP-Rule" id="MF_00605"/>
    </source>
</evidence>
<organism>
    <name type="scientific">Blochmanniella floridana</name>
    <dbReference type="NCBI Taxonomy" id="203907"/>
    <lineage>
        <taxon>Bacteria</taxon>
        <taxon>Pseudomonadati</taxon>
        <taxon>Pseudomonadota</taxon>
        <taxon>Gammaproteobacteria</taxon>
        <taxon>Enterobacterales</taxon>
        <taxon>Enterobacteriaceae</taxon>
        <taxon>ant endosymbionts</taxon>
        <taxon>Candidatus Blochmanniella</taxon>
    </lineage>
</organism>
<accession>Q7U345</accession>
<feature type="chain" id="PRO_0000060335" description="tRNA (guanine-N(1)-)-methyltransferase">
    <location>
        <begin position="1"/>
        <end position="248"/>
    </location>
</feature>
<feature type="binding site" evidence="1">
    <location>
        <position position="114"/>
    </location>
    <ligand>
        <name>S-adenosyl-L-methionine</name>
        <dbReference type="ChEBI" id="CHEBI:59789"/>
    </ligand>
</feature>
<feature type="binding site" evidence="1">
    <location>
        <begin position="134"/>
        <end position="139"/>
    </location>
    <ligand>
        <name>S-adenosyl-L-methionine</name>
        <dbReference type="ChEBI" id="CHEBI:59789"/>
    </ligand>
</feature>
<comment type="function">
    <text evidence="1">Specifically methylates guanosine-37 in various tRNAs.</text>
</comment>
<comment type="catalytic activity">
    <reaction evidence="1">
        <text>guanosine(37) in tRNA + S-adenosyl-L-methionine = N(1)-methylguanosine(37) in tRNA + S-adenosyl-L-homocysteine + H(+)</text>
        <dbReference type="Rhea" id="RHEA:36899"/>
        <dbReference type="Rhea" id="RHEA-COMP:10145"/>
        <dbReference type="Rhea" id="RHEA-COMP:10147"/>
        <dbReference type="ChEBI" id="CHEBI:15378"/>
        <dbReference type="ChEBI" id="CHEBI:57856"/>
        <dbReference type="ChEBI" id="CHEBI:59789"/>
        <dbReference type="ChEBI" id="CHEBI:73542"/>
        <dbReference type="ChEBI" id="CHEBI:74269"/>
        <dbReference type="EC" id="2.1.1.228"/>
    </reaction>
</comment>
<comment type="subunit">
    <text evidence="1">Homodimer.</text>
</comment>
<comment type="subcellular location">
    <subcellularLocation>
        <location evidence="1">Cytoplasm</location>
    </subcellularLocation>
</comment>
<comment type="similarity">
    <text evidence="1">Belongs to the RNA methyltransferase TrmD family.</text>
</comment>